<comment type="function">
    <text evidence="1">Mannosylates Man(2)GlcNAc(2)-dolichol diphosphate and Man(1)GlcNAc(2)-dolichol diphosphate to form Man(3)GlcNAc(2)-dolichol diphosphate.</text>
</comment>
<comment type="catalytic activity">
    <reaction evidence="1">
        <text>a beta-D-Man-(1-&gt;4)-beta-D-GlcNAc-(1-&gt;4)-alpha-D-GlcNAc-diphospho-di-trans,poly-cis-dolichol + GDP-alpha-D-mannose = an alpha-D-Man-(1-&gt;3)-beta-D-Man-(1-&gt;4)-beta-D-GlcNAc-(1-&gt;4)-alpha-D-GlcNAc-diphospho-di-trans,poly-cis-dolichol + GDP + H(+)</text>
        <dbReference type="Rhea" id="RHEA:29515"/>
        <dbReference type="Rhea" id="RHEA-COMP:19511"/>
        <dbReference type="Rhea" id="RHEA-COMP:19513"/>
        <dbReference type="ChEBI" id="CHEBI:15378"/>
        <dbReference type="ChEBI" id="CHEBI:57527"/>
        <dbReference type="ChEBI" id="CHEBI:58189"/>
        <dbReference type="ChEBI" id="CHEBI:58472"/>
        <dbReference type="ChEBI" id="CHEBI:132510"/>
        <dbReference type="EC" id="2.4.1.132"/>
    </reaction>
    <physiologicalReaction direction="left-to-right" evidence="1">
        <dbReference type="Rhea" id="RHEA:29516"/>
    </physiologicalReaction>
</comment>
<comment type="catalytic activity">
    <reaction evidence="1">
        <text>an alpha-D-Man-(1-&gt;3)-beta-D-Man-(1-&gt;4)-beta-D-GlcNAc-(1-&gt;4)-alpha-D-GlcNAc-diphospho-di-trans,poly-cis-dolichol + GDP-alpha-D-mannose = an alpha-D-Man-(1-&gt;3)-[alpha-D-Man-(1-&gt;6)]-beta-D-Man-(1-&gt;4)-beta-D-GlcNAc-(1-&gt;4)-alpha-D-GlcNAc-diphospho-di-trans,poly-cis-dolichol + GDP + H(+)</text>
        <dbReference type="Rhea" id="RHEA:29519"/>
        <dbReference type="Rhea" id="RHEA-COMP:19513"/>
        <dbReference type="Rhea" id="RHEA-COMP:19515"/>
        <dbReference type="ChEBI" id="CHEBI:15378"/>
        <dbReference type="ChEBI" id="CHEBI:57527"/>
        <dbReference type="ChEBI" id="CHEBI:58189"/>
        <dbReference type="ChEBI" id="CHEBI:132510"/>
        <dbReference type="ChEBI" id="CHEBI:132511"/>
        <dbReference type="EC" id="2.4.1.257"/>
    </reaction>
    <physiologicalReaction direction="left-to-right" evidence="1">
        <dbReference type="Rhea" id="RHEA:29520"/>
    </physiologicalReaction>
</comment>
<comment type="pathway">
    <text evidence="1">Protein modification; protein glycosylation.</text>
</comment>
<comment type="subcellular location">
    <subcellularLocation>
        <location evidence="1">Endoplasmic reticulum membrane</location>
        <topology evidence="2">Single-pass membrane protein</topology>
    </subcellularLocation>
</comment>
<comment type="similarity">
    <text evidence="3">Belongs to the glycosyltransferase group 1 family.</text>
</comment>
<protein>
    <recommendedName>
        <fullName>Alpha-1,3/1,6-mannosyltransferase ALG2</fullName>
        <ecNumber evidence="1">2.4.1.132</ecNumber>
        <ecNumber evidence="1">2.4.1.257</ecNumber>
    </recommendedName>
    <alternativeName>
        <fullName>Asparagine-linked glycosylation protein 2</fullName>
    </alternativeName>
    <alternativeName>
        <fullName>GDP-Man:Man(1)GlcNAc(2)-PP-Dol alpha-1,3-mannosyltransferase</fullName>
    </alternativeName>
    <alternativeName>
        <fullName>GDP-Man:Man(1)GlcNAc(2)-PP-dolichol mannosyltransferase</fullName>
    </alternativeName>
    <alternativeName>
        <fullName>GDP-Man:Man(2)GlcNAc(2)-PP-Dol alpha-1,6-mannosyltransferase</fullName>
    </alternativeName>
</protein>
<keyword id="KW-0256">Endoplasmic reticulum</keyword>
<keyword id="KW-0325">Glycoprotein</keyword>
<keyword id="KW-0328">Glycosyltransferase</keyword>
<keyword id="KW-0472">Membrane</keyword>
<keyword id="KW-1185">Reference proteome</keyword>
<keyword id="KW-0808">Transferase</keyword>
<keyword id="KW-0812">Transmembrane</keyword>
<keyword id="KW-1133">Transmembrane helix</keyword>
<name>ALG2_YARLI</name>
<evidence type="ECO:0000250" key="1">
    <source>
        <dbReference type="UniProtKB" id="P43636"/>
    </source>
</evidence>
<evidence type="ECO:0000255" key="2"/>
<evidence type="ECO:0000305" key="3"/>
<proteinExistence type="inferred from homology"/>
<organism>
    <name type="scientific">Yarrowia lipolytica (strain CLIB 122 / E 150)</name>
    <name type="common">Yeast</name>
    <name type="synonym">Candida lipolytica</name>
    <dbReference type="NCBI Taxonomy" id="284591"/>
    <lineage>
        <taxon>Eukaryota</taxon>
        <taxon>Fungi</taxon>
        <taxon>Dikarya</taxon>
        <taxon>Ascomycota</taxon>
        <taxon>Saccharomycotina</taxon>
        <taxon>Dipodascomycetes</taxon>
        <taxon>Dipodascales</taxon>
        <taxon>Dipodascales incertae sedis</taxon>
        <taxon>Yarrowia</taxon>
    </lineage>
</organism>
<reference key="1">
    <citation type="journal article" date="2004" name="Nature">
        <title>Genome evolution in yeasts.</title>
        <authorList>
            <person name="Dujon B."/>
            <person name="Sherman D."/>
            <person name="Fischer G."/>
            <person name="Durrens P."/>
            <person name="Casaregola S."/>
            <person name="Lafontaine I."/>
            <person name="de Montigny J."/>
            <person name="Marck C."/>
            <person name="Neuveglise C."/>
            <person name="Talla E."/>
            <person name="Goffard N."/>
            <person name="Frangeul L."/>
            <person name="Aigle M."/>
            <person name="Anthouard V."/>
            <person name="Babour A."/>
            <person name="Barbe V."/>
            <person name="Barnay S."/>
            <person name="Blanchin S."/>
            <person name="Beckerich J.-M."/>
            <person name="Beyne E."/>
            <person name="Bleykasten C."/>
            <person name="Boisrame A."/>
            <person name="Boyer J."/>
            <person name="Cattolico L."/>
            <person name="Confanioleri F."/>
            <person name="de Daruvar A."/>
            <person name="Despons L."/>
            <person name="Fabre E."/>
            <person name="Fairhead C."/>
            <person name="Ferry-Dumazet H."/>
            <person name="Groppi A."/>
            <person name="Hantraye F."/>
            <person name="Hennequin C."/>
            <person name="Jauniaux N."/>
            <person name="Joyet P."/>
            <person name="Kachouri R."/>
            <person name="Kerrest A."/>
            <person name="Koszul R."/>
            <person name="Lemaire M."/>
            <person name="Lesur I."/>
            <person name="Ma L."/>
            <person name="Muller H."/>
            <person name="Nicaud J.-M."/>
            <person name="Nikolski M."/>
            <person name="Oztas S."/>
            <person name="Ozier-Kalogeropoulos O."/>
            <person name="Pellenz S."/>
            <person name="Potier S."/>
            <person name="Richard G.-F."/>
            <person name="Straub M.-L."/>
            <person name="Suleau A."/>
            <person name="Swennen D."/>
            <person name="Tekaia F."/>
            <person name="Wesolowski-Louvel M."/>
            <person name="Westhof E."/>
            <person name="Wirth B."/>
            <person name="Zeniou-Meyer M."/>
            <person name="Zivanovic Y."/>
            <person name="Bolotin-Fukuhara M."/>
            <person name="Thierry A."/>
            <person name="Bouchier C."/>
            <person name="Caudron B."/>
            <person name="Scarpelli C."/>
            <person name="Gaillardin C."/>
            <person name="Weissenbach J."/>
            <person name="Wincker P."/>
            <person name="Souciet J.-L."/>
        </authorList>
    </citation>
    <scope>NUCLEOTIDE SEQUENCE [LARGE SCALE GENOMIC DNA]</scope>
    <source>
        <strain>CLIB 122 / E 150</strain>
    </source>
</reference>
<dbReference type="EC" id="2.4.1.132" evidence="1"/>
<dbReference type="EC" id="2.4.1.257" evidence="1"/>
<dbReference type="EMBL" id="CR382131">
    <property type="protein sequence ID" value="CAG80259.1"/>
    <property type="molecule type" value="Genomic_DNA"/>
</dbReference>
<dbReference type="RefSeq" id="XP_504655.1">
    <property type="nucleotide sequence ID" value="XM_504655.1"/>
</dbReference>
<dbReference type="SMR" id="Q6C3V7"/>
<dbReference type="FunCoup" id="Q6C3V7">
    <property type="interactions" value="745"/>
</dbReference>
<dbReference type="STRING" id="284591.Q6C3V7"/>
<dbReference type="CAZy" id="GT4">
    <property type="family name" value="Glycosyltransferase Family 4"/>
</dbReference>
<dbReference type="GlyCosmos" id="Q6C3V7">
    <property type="glycosylation" value="2 sites, No reported glycans"/>
</dbReference>
<dbReference type="EnsemblFungi" id="CAG80259">
    <property type="protein sequence ID" value="CAG80259"/>
    <property type="gene ID" value="YALI0_E31797g"/>
</dbReference>
<dbReference type="KEGG" id="yli:2911827"/>
<dbReference type="VEuPathDB" id="FungiDB:YALI0_E31797g"/>
<dbReference type="HOGENOM" id="CLU_030619_1_0_1"/>
<dbReference type="InParanoid" id="Q6C3V7"/>
<dbReference type="OMA" id="AMYMKCP"/>
<dbReference type="OrthoDB" id="103966at4891"/>
<dbReference type="UniPathway" id="UPA00378"/>
<dbReference type="Proteomes" id="UP000001300">
    <property type="component" value="Chromosome E"/>
</dbReference>
<dbReference type="GO" id="GO:0012505">
    <property type="term" value="C:endomembrane system"/>
    <property type="evidence" value="ECO:0000318"/>
    <property type="project" value="GO_Central"/>
</dbReference>
<dbReference type="GO" id="GO:0005789">
    <property type="term" value="C:endoplasmic reticulum membrane"/>
    <property type="evidence" value="ECO:0007669"/>
    <property type="project" value="UniProtKB-SubCell"/>
</dbReference>
<dbReference type="GO" id="GO:0000033">
    <property type="term" value="F:alpha-1,3-mannosyltransferase activity"/>
    <property type="evidence" value="ECO:0000318"/>
    <property type="project" value="GO_Central"/>
</dbReference>
<dbReference type="GO" id="GO:0004378">
    <property type="term" value="F:GDP-Man:Man1GlcNAc2-PP-Dol alpha-1,3-mannosyltransferase activity"/>
    <property type="evidence" value="ECO:0007669"/>
    <property type="project" value="UniProtKB-EC"/>
</dbReference>
<dbReference type="GO" id="GO:0102704">
    <property type="term" value="F:GDP-Man:Man2GlcNAc2-PP-dolichol alpha-1,6-mannosyltransferase activity"/>
    <property type="evidence" value="ECO:0007669"/>
    <property type="project" value="UniProtKB-EC"/>
</dbReference>
<dbReference type="GO" id="GO:0006488">
    <property type="term" value="P:dolichol-linked oligosaccharide biosynthetic process"/>
    <property type="evidence" value="ECO:0000318"/>
    <property type="project" value="GO_Central"/>
</dbReference>
<dbReference type="CDD" id="cd03805">
    <property type="entry name" value="GT4_ALG2-like"/>
    <property type="match status" value="1"/>
</dbReference>
<dbReference type="FunFam" id="3.40.50.2000:FF:000437">
    <property type="entry name" value="Alpha-1,3/1,6-mannosyltransferase alg2"/>
    <property type="match status" value="1"/>
</dbReference>
<dbReference type="Gene3D" id="3.40.50.2000">
    <property type="entry name" value="Glycogen Phosphorylase B"/>
    <property type="match status" value="2"/>
</dbReference>
<dbReference type="InterPro" id="IPR027054">
    <property type="entry name" value="ALG2"/>
</dbReference>
<dbReference type="InterPro" id="IPR001296">
    <property type="entry name" value="Glyco_trans_1"/>
</dbReference>
<dbReference type="InterPro" id="IPR028098">
    <property type="entry name" value="Glyco_trans_4-like_N"/>
</dbReference>
<dbReference type="PANTHER" id="PTHR45918">
    <property type="entry name" value="ALPHA-1,3/1,6-MANNOSYLTRANSFERASE ALG2"/>
    <property type="match status" value="1"/>
</dbReference>
<dbReference type="PANTHER" id="PTHR45918:SF1">
    <property type="entry name" value="ALPHA-1,3_1,6-MANNOSYLTRANSFERASE ALG2"/>
    <property type="match status" value="1"/>
</dbReference>
<dbReference type="Pfam" id="PF13439">
    <property type="entry name" value="Glyco_transf_4"/>
    <property type="match status" value="1"/>
</dbReference>
<dbReference type="Pfam" id="PF00534">
    <property type="entry name" value="Glycos_transf_1"/>
    <property type="match status" value="2"/>
</dbReference>
<dbReference type="SUPFAM" id="SSF53756">
    <property type="entry name" value="UDP-Glycosyltransferase/glycogen phosphorylase"/>
    <property type="match status" value="1"/>
</dbReference>
<feature type="chain" id="PRO_0000080270" description="Alpha-1,3/1,6-mannosyltransferase ALG2">
    <location>
        <begin position="1"/>
        <end position="460"/>
    </location>
</feature>
<feature type="transmembrane region" description="Helical" evidence="2">
    <location>
        <begin position="439"/>
        <end position="459"/>
    </location>
</feature>
<feature type="glycosylation site" description="N-linked (GlcNAc...) asparagine" evidence="2">
    <location>
        <position position="41"/>
    </location>
</feature>
<feature type="glycosylation site" description="N-linked (GlcNAc...) asparagine" evidence="2">
    <location>
        <position position="389"/>
    </location>
</feature>
<accession>Q6C3V7</accession>
<sequence>MRVAFIHPDLGIGGAERWVVDAAVGLQNLGHEVDIYTSYCNKSHCFDEVRDGLLKVTVLGDTICPHTIKGKFAIFCATFRQLHLAYELKKGPGSKVDVFVVDQLSACVPLLKLWFPKARVLFYGHFPDQLLVQNRNQMSLVKKAYRYPFDKFEEITTASADRLVVNSHFTKDMFEKTFPATKNPLVIYPCVDTDIKEQQQGLDRDMITAASQYTFLLSINRFERKKNILLAIEAFGEAQKKSSNLKLAVAGGYDFRVNENVEYLQELILACEKLKLSHISITADKYAKLLEKDTPAAVWTSIFKNDVIFFPSASNSFKNTLLHISKLLLYTPQNEHFGIVPLEGMLWKTPVLATNSGGPLETVKDNVGWTVEGKSELWAPVIDKVVHMNASDYAVLQTECVNWVNRFSQDTMASELEEAMEEVRKKAPTENVGWDYIRLGMWYSVLMTLTLSIVLLAIWP</sequence>
<gene>
    <name type="primary">ALG2</name>
    <name type="ordered locus">YALI0E31797g</name>
</gene>